<protein>
    <recommendedName>
        <fullName evidence="1">2-C-methyl-D-erythritol 2,4-cyclodiphosphate synthase</fullName>
        <shortName evidence="1">MECDP-synthase</shortName>
        <shortName evidence="1">MECPP-synthase</shortName>
        <shortName evidence="1">MECPS</shortName>
        <ecNumber evidence="1">4.6.1.12</ecNumber>
    </recommendedName>
</protein>
<name>ISPF_ECOK1</name>
<reference key="1">
    <citation type="journal article" date="2007" name="J. Bacteriol.">
        <title>The genome sequence of avian pathogenic Escherichia coli strain O1:K1:H7 shares strong similarities with human extraintestinal pathogenic E. coli genomes.</title>
        <authorList>
            <person name="Johnson T.J."/>
            <person name="Kariyawasam S."/>
            <person name="Wannemuehler Y."/>
            <person name="Mangiamele P."/>
            <person name="Johnson S.J."/>
            <person name="Doetkott C."/>
            <person name="Skyberg J.A."/>
            <person name="Lynne A.M."/>
            <person name="Johnson J.R."/>
            <person name="Nolan L.K."/>
        </authorList>
    </citation>
    <scope>NUCLEOTIDE SEQUENCE [LARGE SCALE GENOMIC DNA]</scope>
</reference>
<gene>
    <name evidence="1" type="primary">ispF</name>
    <name type="ordered locus">Ecok1_26860</name>
    <name type="ORF">APECO1_3777</name>
</gene>
<evidence type="ECO:0000255" key="1">
    <source>
        <dbReference type="HAMAP-Rule" id="MF_00107"/>
    </source>
</evidence>
<dbReference type="EC" id="4.6.1.12" evidence="1"/>
<dbReference type="EMBL" id="CP000468">
    <property type="protein sequence ID" value="ABJ02180.1"/>
    <property type="molecule type" value="Genomic_DNA"/>
</dbReference>
<dbReference type="RefSeq" id="WP_001219247.1">
    <property type="nucleotide sequence ID" value="NZ_CADILS010000024.1"/>
</dbReference>
<dbReference type="SMR" id="A1AEU0"/>
<dbReference type="KEGG" id="ecv:APECO1_3777"/>
<dbReference type="HOGENOM" id="CLU_084630_2_0_6"/>
<dbReference type="UniPathway" id="UPA00056">
    <property type="reaction ID" value="UER00095"/>
</dbReference>
<dbReference type="Proteomes" id="UP000008216">
    <property type="component" value="Chromosome"/>
</dbReference>
<dbReference type="GO" id="GO:0008685">
    <property type="term" value="F:2-C-methyl-D-erythritol 2,4-cyclodiphosphate synthase activity"/>
    <property type="evidence" value="ECO:0007669"/>
    <property type="project" value="UniProtKB-UniRule"/>
</dbReference>
<dbReference type="GO" id="GO:0046872">
    <property type="term" value="F:metal ion binding"/>
    <property type="evidence" value="ECO:0007669"/>
    <property type="project" value="UniProtKB-KW"/>
</dbReference>
<dbReference type="GO" id="GO:0019288">
    <property type="term" value="P:isopentenyl diphosphate biosynthetic process, methylerythritol 4-phosphate pathway"/>
    <property type="evidence" value="ECO:0007669"/>
    <property type="project" value="UniProtKB-UniRule"/>
</dbReference>
<dbReference type="GO" id="GO:0016114">
    <property type="term" value="P:terpenoid biosynthetic process"/>
    <property type="evidence" value="ECO:0007669"/>
    <property type="project" value="InterPro"/>
</dbReference>
<dbReference type="CDD" id="cd00554">
    <property type="entry name" value="MECDP_synthase"/>
    <property type="match status" value="1"/>
</dbReference>
<dbReference type="FunFam" id="3.30.1330.50:FF:000001">
    <property type="entry name" value="2-C-methyl-D-erythritol 2,4-cyclodiphosphate synthase"/>
    <property type="match status" value="1"/>
</dbReference>
<dbReference type="Gene3D" id="3.30.1330.50">
    <property type="entry name" value="2-C-methyl-D-erythritol 2,4-cyclodiphosphate synthase"/>
    <property type="match status" value="1"/>
</dbReference>
<dbReference type="HAMAP" id="MF_00107">
    <property type="entry name" value="IspF"/>
    <property type="match status" value="1"/>
</dbReference>
<dbReference type="InterPro" id="IPR003526">
    <property type="entry name" value="MECDP_synthase"/>
</dbReference>
<dbReference type="InterPro" id="IPR020555">
    <property type="entry name" value="MECDP_synthase_CS"/>
</dbReference>
<dbReference type="InterPro" id="IPR036571">
    <property type="entry name" value="MECDP_synthase_sf"/>
</dbReference>
<dbReference type="NCBIfam" id="TIGR00151">
    <property type="entry name" value="ispF"/>
    <property type="match status" value="1"/>
</dbReference>
<dbReference type="PANTHER" id="PTHR43181">
    <property type="entry name" value="2-C-METHYL-D-ERYTHRITOL 2,4-CYCLODIPHOSPHATE SYNTHASE, CHLOROPLASTIC"/>
    <property type="match status" value="1"/>
</dbReference>
<dbReference type="PANTHER" id="PTHR43181:SF1">
    <property type="entry name" value="2-C-METHYL-D-ERYTHRITOL 2,4-CYCLODIPHOSPHATE SYNTHASE, CHLOROPLASTIC"/>
    <property type="match status" value="1"/>
</dbReference>
<dbReference type="Pfam" id="PF02542">
    <property type="entry name" value="YgbB"/>
    <property type="match status" value="1"/>
</dbReference>
<dbReference type="SUPFAM" id="SSF69765">
    <property type="entry name" value="IpsF-like"/>
    <property type="match status" value="1"/>
</dbReference>
<dbReference type="PROSITE" id="PS01350">
    <property type="entry name" value="ISPF"/>
    <property type="match status" value="1"/>
</dbReference>
<feature type="chain" id="PRO_1000022831" description="2-C-methyl-D-erythritol 2,4-cyclodiphosphate synthase">
    <location>
        <begin position="1"/>
        <end position="159"/>
    </location>
</feature>
<feature type="binding site" evidence="1">
    <location>
        <begin position="8"/>
        <end position="10"/>
    </location>
    <ligand>
        <name>4-CDP-2-C-methyl-D-erythritol 2-phosphate</name>
        <dbReference type="ChEBI" id="CHEBI:57919"/>
    </ligand>
</feature>
<feature type="binding site" evidence="1">
    <location>
        <position position="8"/>
    </location>
    <ligand>
        <name>a divalent metal cation</name>
        <dbReference type="ChEBI" id="CHEBI:60240"/>
    </ligand>
</feature>
<feature type="binding site" evidence="1">
    <location>
        <position position="10"/>
    </location>
    <ligand>
        <name>a divalent metal cation</name>
        <dbReference type="ChEBI" id="CHEBI:60240"/>
    </ligand>
</feature>
<feature type="binding site" evidence="1">
    <location>
        <begin position="34"/>
        <end position="35"/>
    </location>
    <ligand>
        <name>4-CDP-2-C-methyl-D-erythritol 2-phosphate</name>
        <dbReference type="ChEBI" id="CHEBI:57919"/>
    </ligand>
</feature>
<feature type="binding site" evidence="1">
    <location>
        <position position="42"/>
    </location>
    <ligand>
        <name>a divalent metal cation</name>
        <dbReference type="ChEBI" id="CHEBI:60240"/>
    </ligand>
</feature>
<feature type="binding site" evidence="1">
    <location>
        <begin position="56"/>
        <end position="58"/>
    </location>
    <ligand>
        <name>4-CDP-2-C-methyl-D-erythritol 2-phosphate</name>
        <dbReference type="ChEBI" id="CHEBI:57919"/>
    </ligand>
</feature>
<feature type="binding site" evidence="1">
    <location>
        <begin position="61"/>
        <end position="65"/>
    </location>
    <ligand>
        <name>4-CDP-2-C-methyl-D-erythritol 2-phosphate</name>
        <dbReference type="ChEBI" id="CHEBI:57919"/>
    </ligand>
</feature>
<feature type="binding site" evidence="1">
    <location>
        <begin position="100"/>
        <end position="106"/>
    </location>
    <ligand>
        <name>4-CDP-2-C-methyl-D-erythritol 2-phosphate</name>
        <dbReference type="ChEBI" id="CHEBI:57919"/>
    </ligand>
</feature>
<feature type="binding site" evidence="1">
    <location>
        <begin position="132"/>
        <end position="135"/>
    </location>
    <ligand>
        <name>4-CDP-2-C-methyl-D-erythritol 2-phosphate</name>
        <dbReference type="ChEBI" id="CHEBI:57919"/>
    </ligand>
</feature>
<feature type="binding site" evidence="1">
    <location>
        <position position="139"/>
    </location>
    <ligand>
        <name>4-CDP-2-C-methyl-D-erythritol 2-phosphate</name>
        <dbReference type="ChEBI" id="CHEBI:57919"/>
    </ligand>
</feature>
<feature type="binding site" evidence="1">
    <location>
        <position position="142"/>
    </location>
    <ligand>
        <name>4-CDP-2-C-methyl-D-erythritol 2-phosphate</name>
        <dbReference type="ChEBI" id="CHEBI:57919"/>
    </ligand>
</feature>
<feature type="site" description="Transition state stabilizer" evidence="1">
    <location>
        <position position="34"/>
    </location>
</feature>
<feature type="site" description="Transition state stabilizer" evidence="1">
    <location>
        <position position="133"/>
    </location>
</feature>
<accession>A1AEU0</accession>
<proteinExistence type="inferred from homology"/>
<comment type="function">
    <text evidence="1">Involved in the biosynthesis of isopentenyl diphosphate (IPP) and dimethylallyl diphosphate (DMAPP), two major building blocks of isoprenoid compounds. Catalyzes the conversion of 4-diphosphocytidyl-2-C-methyl-D-erythritol 2-phosphate (CDP-ME2P) to 2-C-methyl-D-erythritol 2,4-cyclodiphosphate (ME-CPP) with a corresponding release of cytidine 5-monophosphate (CMP).</text>
</comment>
<comment type="catalytic activity">
    <reaction evidence="1">
        <text>4-CDP-2-C-methyl-D-erythritol 2-phosphate = 2-C-methyl-D-erythritol 2,4-cyclic diphosphate + CMP</text>
        <dbReference type="Rhea" id="RHEA:23864"/>
        <dbReference type="ChEBI" id="CHEBI:57919"/>
        <dbReference type="ChEBI" id="CHEBI:58483"/>
        <dbReference type="ChEBI" id="CHEBI:60377"/>
        <dbReference type="EC" id="4.6.1.12"/>
    </reaction>
</comment>
<comment type="cofactor">
    <cofactor evidence="1">
        <name>a divalent metal cation</name>
        <dbReference type="ChEBI" id="CHEBI:60240"/>
    </cofactor>
    <text evidence="1">Binds 1 divalent metal cation per subunit.</text>
</comment>
<comment type="pathway">
    <text evidence="1">Isoprenoid biosynthesis; isopentenyl diphosphate biosynthesis via DXP pathway; isopentenyl diphosphate from 1-deoxy-D-xylulose 5-phosphate: step 4/6.</text>
</comment>
<comment type="subunit">
    <text evidence="1">Homotrimer.</text>
</comment>
<comment type="similarity">
    <text evidence="1">Belongs to the IspF family.</text>
</comment>
<sequence>MRIGHGFDVHAFGGEGPIIIGGVRIPYEKGLLAHSDGDVALHALTDALLGAAALGDIGKLFPDTDPTFKGADSRELLREAWRRIQAKGYALGNVDVTIIAQAPRMLPHIPQMRVFIAEDLGCHMDDVNVKATTTEKLGFTGRGEGIACEAVALLIKATK</sequence>
<keyword id="KW-0414">Isoprene biosynthesis</keyword>
<keyword id="KW-0456">Lyase</keyword>
<keyword id="KW-0479">Metal-binding</keyword>
<keyword id="KW-1185">Reference proteome</keyword>
<organism>
    <name type="scientific">Escherichia coli O1:K1 / APEC</name>
    <dbReference type="NCBI Taxonomy" id="405955"/>
    <lineage>
        <taxon>Bacteria</taxon>
        <taxon>Pseudomonadati</taxon>
        <taxon>Pseudomonadota</taxon>
        <taxon>Gammaproteobacteria</taxon>
        <taxon>Enterobacterales</taxon>
        <taxon>Enterobacteriaceae</taxon>
        <taxon>Escherichia</taxon>
    </lineage>
</organism>